<dbReference type="GO" id="GO:0005576">
    <property type="term" value="C:extracellular region"/>
    <property type="evidence" value="ECO:0007669"/>
    <property type="project" value="UniProtKB-SubCell"/>
</dbReference>
<dbReference type="GO" id="GO:0007218">
    <property type="term" value="P:neuropeptide signaling pathway"/>
    <property type="evidence" value="ECO:0007669"/>
    <property type="project" value="UniProtKB-KW"/>
</dbReference>
<protein>
    <recommendedName>
        <fullName evidence="4">Extended FMRFamide-5</fullName>
        <shortName evidence="4">FMRFa-5</shortName>
    </recommendedName>
</protein>
<sequence length="8" mass="1034">TDRNFLRL</sequence>
<proteinExistence type="evidence at protein level"/>
<comment type="function">
    <text evidence="1">FMRFamides and FMRFamide-like peptides are neuropeptides.</text>
</comment>
<comment type="subcellular location">
    <subcellularLocation>
        <location evidence="6">Secreted</location>
    </subcellularLocation>
</comment>
<comment type="similarity">
    <text evidence="2">Belongs to the FARP (FMRF amide related peptide) family.</text>
</comment>
<feature type="peptide" id="PRO_0000420776" description="Extended FMRFamide-5" evidence="3">
    <location>
        <begin position="1"/>
        <end position="8"/>
    </location>
</feature>
<feature type="modified residue" description="Leucine amide" evidence="3">
    <location>
        <position position="8"/>
    </location>
</feature>
<feature type="unsure residue" description="L or I" evidence="3">
    <location>
        <position position="6"/>
    </location>
</feature>
<feature type="unsure residue" description="L or I" evidence="3">
    <location>
        <position position="8"/>
    </location>
</feature>
<keyword id="KW-0027">Amidation</keyword>
<keyword id="KW-0903">Direct protein sequencing</keyword>
<keyword id="KW-0527">Neuropeptide</keyword>
<keyword id="KW-0964">Secreted</keyword>
<name>FAR5_MANKU</name>
<evidence type="ECO:0000250" key="1">
    <source>
        <dbReference type="UniProtKB" id="P34405"/>
    </source>
</evidence>
<evidence type="ECO:0000255" key="2"/>
<evidence type="ECO:0000269" key="3">
    <source>
    </source>
</evidence>
<evidence type="ECO:0000303" key="4">
    <source>
    </source>
</evidence>
<evidence type="ECO:0000305" key="5"/>
<evidence type="ECO:0000305" key="6">
    <source>
    </source>
</evidence>
<reference evidence="5" key="1">
    <citation type="journal article" date="2012" name="Syst. Biol.">
        <title>Peptidomics-based phylogeny and biogeography of Mantophasmatodea (Hexapoda).</title>
        <authorList>
            <person name="Predel R."/>
            <person name="Neupert S."/>
            <person name="Huetteroth W."/>
            <person name="Kahnt J."/>
            <person name="Waidelich D."/>
            <person name="Roth S."/>
        </authorList>
    </citation>
    <scope>PROTEIN SEQUENCE</scope>
    <scope>AMIDATION AT LEU-8</scope>
    <source>
        <tissue evidence="3">Thoracic perisympathetic organs</tissue>
    </source>
</reference>
<accession>B0M3D0</accession>
<organism>
    <name type="scientific">Mantophasma kudubergense</name>
    <name type="common">Gladiator</name>
    <name type="synonym">Heel-walker</name>
    <dbReference type="NCBI Taxonomy" id="1037657"/>
    <lineage>
        <taxon>Eukaryota</taxon>
        <taxon>Metazoa</taxon>
        <taxon>Ecdysozoa</taxon>
        <taxon>Arthropoda</taxon>
        <taxon>Hexapoda</taxon>
        <taxon>Insecta</taxon>
        <taxon>Pterygota</taxon>
        <taxon>Neoptera</taxon>
        <taxon>Polyneoptera</taxon>
        <taxon>Mantophasmatodea</taxon>
        <taxon>Mantophasmatidae</taxon>
        <taxon>Mantophasma</taxon>
    </lineage>
</organism>